<proteinExistence type="evidence at transcript level"/>
<name>GWL_MOUSE</name>
<comment type="function">
    <text evidence="2 6">Serine/threonine kinase that plays a key role in M phase by acting as a regulator of mitosis entry and maintenance (PubMed:21156286). Acts by promoting the inactivation of protein phosphatase 2A (PP2A) during M phase: does not directly inhibit PP2A but acts by mediating phosphorylation and subsequent activation of ARPP19 and ENSA at 'Ser-62' and 'Ser-67', respectively (By similarity). ARPP19 and ENSA are phosphatase inhibitors that specifically inhibit the PPP2R2D (PR55-delta) subunit of PP2A. Inactivation of PP2A during M phase is essential to keep cyclin-B1-CDK1 activity high (By similarity). Following DNA damage, it is also involved in checkpoint recovery by being inhibited.</text>
</comment>
<comment type="catalytic activity">
    <reaction evidence="2">
        <text>L-seryl-[protein] + ATP = O-phospho-L-seryl-[protein] + ADP + H(+)</text>
        <dbReference type="Rhea" id="RHEA:17989"/>
        <dbReference type="Rhea" id="RHEA-COMP:9863"/>
        <dbReference type="Rhea" id="RHEA-COMP:11604"/>
        <dbReference type="ChEBI" id="CHEBI:15378"/>
        <dbReference type="ChEBI" id="CHEBI:29999"/>
        <dbReference type="ChEBI" id="CHEBI:30616"/>
        <dbReference type="ChEBI" id="CHEBI:83421"/>
        <dbReference type="ChEBI" id="CHEBI:456216"/>
        <dbReference type="EC" id="2.7.11.1"/>
    </reaction>
</comment>
<comment type="catalytic activity">
    <reaction evidence="2">
        <text>L-threonyl-[protein] + ATP = O-phospho-L-threonyl-[protein] + ADP + H(+)</text>
        <dbReference type="Rhea" id="RHEA:46608"/>
        <dbReference type="Rhea" id="RHEA-COMP:11060"/>
        <dbReference type="Rhea" id="RHEA-COMP:11605"/>
        <dbReference type="ChEBI" id="CHEBI:15378"/>
        <dbReference type="ChEBI" id="CHEBI:30013"/>
        <dbReference type="ChEBI" id="CHEBI:30616"/>
        <dbReference type="ChEBI" id="CHEBI:61977"/>
        <dbReference type="ChEBI" id="CHEBI:456216"/>
        <dbReference type="EC" id="2.7.11.1"/>
    </reaction>
</comment>
<comment type="subcellular location">
    <subcellularLocation>
        <location evidence="1">Cytoplasm</location>
        <location evidence="1">Cytoskeleton</location>
        <location evidence="1">Microtubule organizing center</location>
        <location evidence="1">Centrosome</location>
    </subcellularLocation>
    <subcellularLocation>
        <location>Nucleus</location>
    </subcellularLocation>
    <text evidence="1">During interphase is mainly nuclear, upon nuclear envelope breakdown localizes at the cytoplasm and during mitosis at the centrosomes.</text>
</comment>
<comment type="alternative products">
    <event type="alternative splicing"/>
    <isoform>
        <id>Q8C0P0-1</id>
        <name>1</name>
        <sequence type="displayed"/>
    </isoform>
    <isoform>
        <id>Q8C0P0-2</id>
        <name>2</name>
        <sequence type="described" ref="VSP_014576 VSP_014577"/>
    </isoform>
</comment>
<comment type="PTM">
    <text evidence="1">Phosphorylation at Thr-727 by CDK1 during M phase activates its kinase activity. Maximum phosphorylation occurs in prometaphase (By similarity).</text>
</comment>
<comment type="similarity">
    <text evidence="8">Belongs to the protein kinase superfamily. AGC Ser/Thr protein kinase family.</text>
</comment>
<comment type="sequence caution" evidence="8">
    <conflict type="erroneous initiation">
        <sequence resource="EMBL-CDS" id="AAH86483"/>
    </conflict>
</comment>
<comment type="sequence caution" evidence="8">
    <conflict type="erroneous initiation">
        <sequence resource="EMBL-CDS" id="BAB24595"/>
    </conflict>
</comment>
<comment type="sequence caution" evidence="8">
    <conflict type="erroneous termination">
        <sequence resource="EMBL-CDS" id="BAC37239"/>
    </conflict>
    <text>Truncated C-terminus.</text>
</comment>
<accession>Q8C0P0</accession>
<accession>A2AQY2</accession>
<accession>Q3MIA9</accession>
<accession>Q5RJW0</accession>
<accession>Q6NXX9</accession>
<accession>Q8BVF3</accession>
<accession>Q9CZH9</accession>
<accession>Q9D9V0</accession>
<sequence length="865" mass="95975">MESASASEENEGGAAIEECVSRIPVPRPPSIEEFTIVKPISRGAFGKVYLGQKGGKLYAVKVVKKADMINKNMTHQVQAERDALALSKSPFVVHLYYSLQSASNIYLIMEYLIGGDVKSLLHIYGYFDEEMAIKYISEVALALDYLHRHGIIHRDLKPDNMLISNEGHIKLTDFGLSKVTLNRDINMMDILTTPSMSKPKQDYSRTPGQVLSLISSLGFFTPVGEKDQDSANMFSAPKSAAQLSRGFICPMSVDQKEPTSYSSKLLKSCFETLSSNPEIPVKCLTSNLLQCRKRLGTSSTSSQSHTFVSSVESECHSNPKWERDCQSTESSGCAMSWNAVEMLYAKSTSAIKTKTELELALSPIHDSSAIPAAGSNQVTLPRKCFREISWEARDPDNENMTIDKGQSGFCQSSQRSVNSSATSEEHLGKRNYKRNFHLVDSSPCQEIMQSKKNCTEYEANKERQGCRANQSTGLTTEVQNLKLSGCESQQLDYANKENIVTYLTDRQTPEKLHIPTIAKNLMSELDEDCELSSKKDCLSSNSVCSDEDRALKTTCVDSDSSFPGVSMMESSLEIQALEPDKSIRDYSFEEPNTEDLFVLPKCQENSLPQDDCHACIQDSSQVSAHPSKAPKALTSKINVVAFRSFNSHINASTNSEPSKISITSLDAMDISCDYSGSYPMAVSPTEKGRHYTSHQTPNQVKLGTSYRTPKSVRRGAAPVDDGRILGTPDYLAPELLLGTAHGPAVDWWALGVCLFEFLTGIPPFNDETPQQVFQNILKRDIPWPEGEEKLSDNAQSAMDMLLTIDDSKRAGMRELKQHPLFSEVDWENLQHQTMPFVPQPDDETDTSYFEARNNAQHLTISGFSL</sequence>
<keyword id="KW-0007">Acetylation</keyword>
<keyword id="KW-0025">Alternative splicing</keyword>
<keyword id="KW-0067">ATP-binding</keyword>
<keyword id="KW-0131">Cell cycle</keyword>
<keyword id="KW-0132">Cell division</keyword>
<keyword id="KW-0963">Cytoplasm</keyword>
<keyword id="KW-0206">Cytoskeleton</keyword>
<keyword id="KW-0418">Kinase</keyword>
<keyword id="KW-0498">Mitosis</keyword>
<keyword id="KW-0547">Nucleotide-binding</keyword>
<keyword id="KW-0539">Nucleus</keyword>
<keyword id="KW-0597">Phosphoprotein</keyword>
<keyword id="KW-1185">Reference proteome</keyword>
<keyword id="KW-0723">Serine/threonine-protein kinase</keyword>
<keyword id="KW-0808">Transferase</keyword>
<organism>
    <name type="scientific">Mus musculus</name>
    <name type="common">Mouse</name>
    <dbReference type="NCBI Taxonomy" id="10090"/>
    <lineage>
        <taxon>Eukaryota</taxon>
        <taxon>Metazoa</taxon>
        <taxon>Chordata</taxon>
        <taxon>Craniata</taxon>
        <taxon>Vertebrata</taxon>
        <taxon>Euteleostomi</taxon>
        <taxon>Mammalia</taxon>
        <taxon>Eutheria</taxon>
        <taxon>Euarchontoglires</taxon>
        <taxon>Glires</taxon>
        <taxon>Rodentia</taxon>
        <taxon>Myomorpha</taxon>
        <taxon>Muroidea</taxon>
        <taxon>Muridae</taxon>
        <taxon>Murinae</taxon>
        <taxon>Mus</taxon>
        <taxon>Mus</taxon>
    </lineage>
</organism>
<gene>
    <name type="primary">Mastl</name>
    <name type="synonym">Gw</name>
    <name type="synonym">Gwl</name>
</gene>
<protein>
    <recommendedName>
        <fullName>Serine/threonine-protein kinase greatwall</fullName>
        <shortName>GW</shortName>
        <shortName>GWL</shortName>
        <ecNumber evidence="2">2.7.11.1</ecNumber>
    </recommendedName>
    <alternativeName>
        <fullName>Microtubule-associated serine/threonine-protein kinase-like</fullName>
        <shortName>MAST-L</shortName>
    </alternativeName>
</protein>
<evidence type="ECO:0000250" key="1"/>
<evidence type="ECO:0000250" key="2">
    <source>
        <dbReference type="UniProtKB" id="Q96GX5"/>
    </source>
</evidence>
<evidence type="ECO:0000255" key="3">
    <source>
        <dbReference type="PROSITE-ProRule" id="PRU00159"/>
    </source>
</evidence>
<evidence type="ECO:0000255" key="4">
    <source>
        <dbReference type="PROSITE-ProRule" id="PRU00618"/>
    </source>
</evidence>
<evidence type="ECO:0000255" key="5">
    <source>
        <dbReference type="PROSITE-ProRule" id="PRU10027"/>
    </source>
</evidence>
<evidence type="ECO:0000269" key="6">
    <source>
    </source>
</evidence>
<evidence type="ECO:0000303" key="7">
    <source>
    </source>
</evidence>
<evidence type="ECO:0000305" key="8"/>
<dbReference type="EC" id="2.7.11.1" evidence="2"/>
<dbReference type="EMBL" id="AK006448">
    <property type="protein sequence ID" value="BAB24595.1"/>
    <property type="status" value="ALT_INIT"/>
    <property type="molecule type" value="mRNA"/>
</dbReference>
<dbReference type="EMBL" id="AK012597">
    <property type="protein sequence ID" value="BAB28343.2"/>
    <property type="molecule type" value="mRNA"/>
</dbReference>
<dbReference type="EMBL" id="AK030140">
    <property type="protein sequence ID" value="BAC26804.1"/>
    <property type="molecule type" value="mRNA"/>
</dbReference>
<dbReference type="EMBL" id="AK078365">
    <property type="protein sequence ID" value="BAC37239.1"/>
    <property type="status" value="ALT_SEQ"/>
    <property type="molecule type" value="mRNA"/>
</dbReference>
<dbReference type="EMBL" id="AL845257">
    <property type="status" value="NOT_ANNOTATED_CDS"/>
    <property type="molecule type" value="Genomic_DNA"/>
</dbReference>
<dbReference type="EMBL" id="CH466542">
    <property type="protein sequence ID" value="EDL08150.1"/>
    <property type="molecule type" value="Genomic_DNA"/>
</dbReference>
<dbReference type="EMBL" id="BC066834">
    <property type="protein sequence ID" value="AAH66834.1"/>
    <property type="molecule type" value="mRNA"/>
</dbReference>
<dbReference type="EMBL" id="BC086483">
    <property type="protein sequence ID" value="AAH86483.1"/>
    <property type="status" value="ALT_INIT"/>
    <property type="molecule type" value="mRNA"/>
</dbReference>
<dbReference type="EMBL" id="BC103779">
    <property type="protein sequence ID" value="AAI03780.1"/>
    <property type="molecule type" value="mRNA"/>
</dbReference>
<dbReference type="CCDS" id="CCDS15727.1">
    <molecule id="Q8C0P0-1"/>
</dbReference>
<dbReference type="RefSeq" id="NP_080255.3">
    <molecule id="Q8C0P0-1"/>
    <property type="nucleotide sequence ID" value="NM_025979.4"/>
</dbReference>
<dbReference type="SMR" id="Q8C0P0"/>
<dbReference type="BioGRID" id="211955">
    <property type="interactions" value="1"/>
</dbReference>
<dbReference type="FunCoup" id="Q8C0P0">
    <property type="interactions" value="2846"/>
</dbReference>
<dbReference type="STRING" id="10090.ENSMUSP00000028119"/>
<dbReference type="GlyGen" id="Q8C0P0">
    <property type="glycosylation" value="1 site, 1 O-linked glycan (1 site)"/>
</dbReference>
<dbReference type="iPTMnet" id="Q8C0P0"/>
<dbReference type="PhosphoSitePlus" id="Q8C0P0"/>
<dbReference type="jPOST" id="Q8C0P0"/>
<dbReference type="PaxDb" id="10090-ENSMUSP00000028119"/>
<dbReference type="PeptideAtlas" id="Q8C0P0"/>
<dbReference type="ProteomicsDB" id="271116">
    <molecule id="Q8C0P0-1"/>
</dbReference>
<dbReference type="ProteomicsDB" id="271117">
    <molecule id="Q8C0P0-2"/>
</dbReference>
<dbReference type="Pumba" id="Q8C0P0"/>
<dbReference type="Antibodypedia" id="12704">
    <property type="antibodies" value="344 antibodies from 33 providers"/>
</dbReference>
<dbReference type="DNASU" id="67121"/>
<dbReference type="Ensembl" id="ENSMUST00000028119.7">
    <molecule id="Q8C0P0-1"/>
    <property type="protein sequence ID" value="ENSMUSP00000028119.7"/>
    <property type="gene ID" value="ENSMUSG00000026779.7"/>
</dbReference>
<dbReference type="GeneID" id="67121"/>
<dbReference type="KEGG" id="mmu:67121"/>
<dbReference type="UCSC" id="uc008iob.2">
    <molecule id="Q8C0P0-1"/>
    <property type="organism name" value="mouse"/>
</dbReference>
<dbReference type="UCSC" id="uc008ioc.1">
    <molecule id="Q8C0P0-2"/>
    <property type="organism name" value="mouse"/>
</dbReference>
<dbReference type="AGR" id="MGI:1914371"/>
<dbReference type="CTD" id="84930"/>
<dbReference type="MGI" id="MGI:1914371">
    <property type="gene designation" value="Mastl"/>
</dbReference>
<dbReference type="VEuPathDB" id="HostDB:ENSMUSG00000026779"/>
<dbReference type="eggNOG" id="KOG0606">
    <property type="taxonomic scope" value="Eukaryota"/>
</dbReference>
<dbReference type="GeneTree" id="ENSGT00940000157002"/>
<dbReference type="HOGENOM" id="CLU_016048_0_0_1"/>
<dbReference type="InParanoid" id="Q8C0P0"/>
<dbReference type="OMA" id="VMKKNEM"/>
<dbReference type="OrthoDB" id="162894at2759"/>
<dbReference type="PhylomeDB" id="Q8C0P0"/>
<dbReference type="TreeFam" id="TF313149"/>
<dbReference type="Reactome" id="R-MMU-2465910">
    <property type="pathway name" value="MASTL Facilitates Mitotic Progression"/>
</dbReference>
<dbReference type="BioGRID-ORCS" id="67121">
    <property type="hits" value="23 hits in 82 CRISPR screens"/>
</dbReference>
<dbReference type="ChiTaRS" id="Lrp6">
    <property type="organism name" value="mouse"/>
</dbReference>
<dbReference type="PRO" id="PR:Q8C0P0"/>
<dbReference type="Proteomes" id="UP000000589">
    <property type="component" value="Chromosome 2"/>
</dbReference>
<dbReference type="RNAct" id="Q8C0P0">
    <property type="molecule type" value="protein"/>
</dbReference>
<dbReference type="Bgee" id="ENSMUSG00000026779">
    <property type="expression patterns" value="Expressed in animal zygote and 195 other cell types or tissues"/>
</dbReference>
<dbReference type="GO" id="GO:0005813">
    <property type="term" value="C:centrosome"/>
    <property type="evidence" value="ECO:0000250"/>
    <property type="project" value="UniProtKB"/>
</dbReference>
<dbReference type="GO" id="GO:0032154">
    <property type="term" value="C:cleavage furrow"/>
    <property type="evidence" value="ECO:0000250"/>
    <property type="project" value="UniProtKB"/>
</dbReference>
<dbReference type="GO" id="GO:0005737">
    <property type="term" value="C:cytoplasm"/>
    <property type="evidence" value="ECO:0007669"/>
    <property type="project" value="UniProtKB-KW"/>
</dbReference>
<dbReference type="GO" id="GO:0005654">
    <property type="term" value="C:nucleoplasm"/>
    <property type="evidence" value="ECO:0007669"/>
    <property type="project" value="Ensembl"/>
</dbReference>
<dbReference type="GO" id="GO:0005634">
    <property type="term" value="C:nucleus"/>
    <property type="evidence" value="ECO:0000250"/>
    <property type="project" value="UniProtKB"/>
</dbReference>
<dbReference type="GO" id="GO:0005524">
    <property type="term" value="F:ATP binding"/>
    <property type="evidence" value="ECO:0007669"/>
    <property type="project" value="UniProtKB-KW"/>
</dbReference>
<dbReference type="GO" id="GO:0051721">
    <property type="term" value="F:protein phosphatase 2A binding"/>
    <property type="evidence" value="ECO:0000250"/>
    <property type="project" value="UniProtKB"/>
</dbReference>
<dbReference type="GO" id="GO:0106310">
    <property type="term" value="F:protein serine kinase activity"/>
    <property type="evidence" value="ECO:0007669"/>
    <property type="project" value="RHEA"/>
</dbReference>
<dbReference type="GO" id="GO:0004674">
    <property type="term" value="F:protein serine/threonine kinase activity"/>
    <property type="evidence" value="ECO:0000250"/>
    <property type="project" value="UniProtKB"/>
</dbReference>
<dbReference type="GO" id="GO:0044325">
    <property type="term" value="F:transmembrane transporter binding"/>
    <property type="evidence" value="ECO:0000353"/>
    <property type="project" value="ARUK-UCL"/>
</dbReference>
<dbReference type="GO" id="GO:0051301">
    <property type="term" value="P:cell division"/>
    <property type="evidence" value="ECO:0007669"/>
    <property type="project" value="UniProtKB-KW"/>
</dbReference>
<dbReference type="GO" id="GO:0006974">
    <property type="term" value="P:DNA damage response"/>
    <property type="evidence" value="ECO:0000250"/>
    <property type="project" value="UniProtKB"/>
</dbReference>
<dbReference type="GO" id="GO:0007147">
    <property type="term" value="P:female meiosis II"/>
    <property type="evidence" value="ECO:0000315"/>
    <property type="project" value="MGI"/>
</dbReference>
<dbReference type="GO" id="GO:0000086">
    <property type="term" value="P:G2/M transition of mitotic cell cycle"/>
    <property type="evidence" value="ECO:0000250"/>
    <property type="project" value="UniProtKB"/>
</dbReference>
<dbReference type="GO" id="GO:0000278">
    <property type="term" value="P:mitotic cell cycle"/>
    <property type="evidence" value="ECO:0000250"/>
    <property type="project" value="UniProtKB"/>
</dbReference>
<dbReference type="GO" id="GO:0051726">
    <property type="term" value="P:regulation of cell cycle"/>
    <property type="evidence" value="ECO:0007669"/>
    <property type="project" value="Ensembl"/>
</dbReference>
<dbReference type="FunFam" id="1.10.510.10:FF:000278">
    <property type="entry name" value="serine/threonine-protein kinase greatwall isoform X1"/>
    <property type="match status" value="1"/>
</dbReference>
<dbReference type="FunFam" id="1.10.510.10:FF:001219">
    <property type="entry name" value="serine/threonine-protein kinase greatwall isoform X1"/>
    <property type="match status" value="1"/>
</dbReference>
<dbReference type="FunFam" id="3.30.200.20:FF:000277">
    <property type="entry name" value="serine/threonine-protein kinase greatwall isoform X1"/>
    <property type="match status" value="1"/>
</dbReference>
<dbReference type="Gene3D" id="3.30.200.20">
    <property type="entry name" value="Phosphorylase Kinase, domain 1"/>
    <property type="match status" value="2"/>
</dbReference>
<dbReference type="Gene3D" id="1.10.510.10">
    <property type="entry name" value="Transferase(Phosphotransferase) domain 1"/>
    <property type="match status" value="2"/>
</dbReference>
<dbReference type="InterPro" id="IPR000961">
    <property type="entry name" value="AGC-kinase_C"/>
</dbReference>
<dbReference type="InterPro" id="IPR011009">
    <property type="entry name" value="Kinase-like_dom_sf"/>
</dbReference>
<dbReference type="InterPro" id="IPR000719">
    <property type="entry name" value="Prot_kinase_dom"/>
</dbReference>
<dbReference type="InterPro" id="IPR008271">
    <property type="entry name" value="Ser/Thr_kinase_AS"/>
</dbReference>
<dbReference type="InterPro" id="IPR050236">
    <property type="entry name" value="Ser_Thr_kinase_AGC"/>
</dbReference>
<dbReference type="PANTHER" id="PTHR24356">
    <property type="entry name" value="SERINE/THREONINE-PROTEIN KINASE"/>
    <property type="match status" value="1"/>
</dbReference>
<dbReference type="PANTHER" id="PTHR24356:SF1">
    <property type="entry name" value="SERINE_THREONINE-PROTEIN KINASE GREATWALL"/>
    <property type="match status" value="1"/>
</dbReference>
<dbReference type="Pfam" id="PF00069">
    <property type="entry name" value="Pkinase"/>
    <property type="match status" value="2"/>
</dbReference>
<dbReference type="SMART" id="SM00220">
    <property type="entry name" value="S_TKc"/>
    <property type="match status" value="1"/>
</dbReference>
<dbReference type="SUPFAM" id="SSF56112">
    <property type="entry name" value="Protein kinase-like (PK-like)"/>
    <property type="match status" value="1"/>
</dbReference>
<dbReference type="PROSITE" id="PS51285">
    <property type="entry name" value="AGC_KINASE_CTER"/>
    <property type="match status" value="1"/>
</dbReference>
<dbReference type="PROSITE" id="PS50011">
    <property type="entry name" value="PROTEIN_KINASE_DOM"/>
    <property type="match status" value="1"/>
</dbReference>
<dbReference type="PROSITE" id="PS00108">
    <property type="entry name" value="PROTEIN_KINASE_ST"/>
    <property type="match status" value="1"/>
</dbReference>
<feature type="chain" id="PRO_0000086316" description="Serine/threonine-protein kinase greatwall">
    <location>
        <begin position="1"/>
        <end position="865"/>
    </location>
</feature>
<feature type="domain" description="Protein kinase" evidence="3">
    <location>
        <begin position="34"/>
        <end position="821"/>
    </location>
</feature>
<feature type="domain" description="AGC-kinase C-terminal" evidence="4">
    <location>
        <begin position="822"/>
        <end position="865"/>
    </location>
</feature>
<feature type="active site" description="Proton acceptor" evidence="3 5">
    <location>
        <position position="155"/>
    </location>
</feature>
<feature type="binding site" evidence="3">
    <location>
        <begin position="40"/>
        <end position="48"/>
    </location>
    <ligand>
        <name>ATP</name>
        <dbReference type="ChEBI" id="CHEBI:30616"/>
    </ligand>
</feature>
<feature type="binding site" evidence="3">
    <location>
        <position position="61"/>
    </location>
    <ligand>
        <name>ATP</name>
        <dbReference type="ChEBI" id="CHEBI:30616"/>
    </ligand>
</feature>
<feature type="modified residue" description="N-acetylmethionine" evidence="2">
    <location>
        <position position="1"/>
    </location>
</feature>
<feature type="modified residue" description="Phosphothreonine" evidence="2">
    <location>
        <position position="206"/>
    </location>
</feature>
<feature type="modified residue" description="Phosphothreonine" evidence="2">
    <location>
        <position position="221"/>
    </location>
</feature>
<feature type="modified residue" description="Phosphoserine" evidence="2">
    <location>
        <position position="362"/>
    </location>
</feature>
<feature type="modified residue" description="Phosphoserine" evidence="2">
    <location>
        <position position="442"/>
    </location>
</feature>
<feature type="modified residue" description="Phosphothreonine" evidence="2">
    <location>
        <position position="508"/>
    </location>
</feature>
<feature type="modified residue" description="Phosphoserine" evidence="2">
    <location>
        <position position="545"/>
    </location>
</feature>
<feature type="modified residue" description="Phosphoserine" evidence="2">
    <location>
        <position position="619"/>
    </location>
</feature>
<feature type="modified residue" description="Phosphoserine" evidence="2">
    <location>
        <position position="644"/>
    </location>
</feature>
<feature type="modified residue" description="Phosphoserine" evidence="2">
    <location>
        <position position="655"/>
    </location>
</feature>
<feature type="modified residue" description="Phosphothreonine" evidence="2">
    <location>
        <position position="708"/>
    </location>
</feature>
<feature type="modified residue" description="Phosphoserine" evidence="2">
    <location>
        <position position="711"/>
    </location>
</feature>
<feature type="modified residue" description="Phosphothreonine; by CDK1" evidence="2">
    <location>
        <position position="727"/>
    </location>
</feature>
<feature type="modified residue" description="Phosphoserine" evidence="2">
    <location>
        <position position="861"/>
    </location>
</feature>
<feature type="modified residue" description="Phosphoserine" evidence="2">
    <location>
        <position position="864"/>
    </location>
</feature>
<feature type="splice variant" id="VSP_014576" description="In isoform 2." evidence="7">
    <original>STESSGCAMSWNAVEMLYAKST</original>
    <variation>VSSKYSSLKLIYTRNQ</variation>
    <location>
        <begin position="327"/>
        <end position="348"/>
    </location>
</feature>
<feature type="splice variant" id="VSP_014577" description="In isoform 2." evidence="7">
    <location>
        <begin position="349"/>
        <end position="865"/>
    </location>
</feature>
<feature type="sequence conflict" description="In Ref. 1; BAC37239." evidence="8" ref="1">
    <original>V</original>
    <variation>E</variation>
    <location>
        <position position="37"/>
    </location>
</feature>
<feature type="sequence conflict" description="In Ref. 1; BAC37239." evidence="8" ref="1">
    <original>V</original>
    <variation>G</variation>
    <location>
        <position position="62"/>
    </location>
</feature>
<feature type="sequence conflict" description="In Ref. 1; BAC26804." evidence="8" ref="1">
    <original>I</original>
    <variation>V</variation>
    <location>
        <position position="69"/>
    </location>
</feature>
<feature type="sequence conflict" description="In Ref. 1; BAC37239." evidence="8" ref="1">
    <original>A</original>
    <variation>S</variation>
    <location>
        <position position="79"/>
    </location>
</feature>
<feature type="sequence conflict" description="In Ref. 1; BAC37239." evidence="8" ref="1">
    <original>N</original>
    <variation>I</variation>
    <location>
        <position position="104"/>
    </location>
</feature>
<feature type="sequence conflict" description="In Ref. 1; BAC37239." evidence="8" ref="1">
    <original>K</original>
    <variation>Q</variation>
    <location>
        <position position="118"/>
    </location>
</feature>
<feature type="sequence conflict" description="In Ref. 4; AAI03780." evidence="8" ref="4">
    <original>P</original>
    <variation>S</variation>
    <location>
        <position position="222"/>
    </location>
</feature>
<feature type="sequence conflict" description="In Ref. 1; BAB24595." evidence="8" ref="1">
    <original>F</original>
    <variation>L</variation>
    <location>
        <position position="247"/>
    </location>
</feature>
<feature type="sequence conflict" description="In Ref. 4; AAI03780." evidence="8" ref="4">
    <original>E</original>
    <variation>G</variation>
    <location>
        <position position="314"/>
    </location>
</feature>
<feature type="sequence conflict" description="In Ref. 1; BAC37239." evidence="8" ref="1">
    <original>R</original>
    <variation>T</variation>
    <location>
        <position position="323"/>
    </location>
</feature>
<feature type="sequence conflict" description="In Ref. 1; BAB28343." evidence="8" ref="1">
    <original>N</original>
    <variation>D</variation>
    <location>
        <position position="376"/>
    </location>
</feature>
<feature type="sequence conflict" description="In Ref. 4; AAI03780." evidence="8" ref="4">
    <original>T</original>
    <variation>S</variation>
    <location>
        <position position="455"/>
    </location>
</feature>
<feature type="sequence conflict" description="In Ref. 2; AAH66834/AAH86483." evidence="8" ref="2">
    <original>C</original>
    <variation>R</variation>
    <location>
        <position position="529"/>
    </location>
</feature>
<feature type="sequence conflict" description="In Ref. 2; AAH66834/AAH86483." evidence="8" ref="2">
    <original>C</original>
    <variation>Y</variation>
    <location>
        <position position="672"/>
    </location>
</feature>
<feature type="sequence conflict" description="In Ref. 4; AAI03780." evidence="8" ref="4">
    <original>Q</original>
    <variation>R</variation>
    <location>
        <position position="699"/>
    </location>
</feature>
<reference key="1">
    <citation type="journal article" date="2005" name="Science">
        <title>The transcriptional landscape of the mammalian genome.</title>
        <authorList>
            <person name="Carninci P."/>
            <person name="Kasukawa T."/>
            <person name="Katayama S."/>
            <person name="Gough J."/>
            <person name="Frith M.C."/>
            <person name="Maeda N."/>
            <person name="Oyama R."/>
            <person name="Ravasi T."/>
            <person name="Lenhard B."/>
            <person name="Wells C."/>
            <person name="Kodzius R."/>
            <person name="Shimokawa K."/>
            <person name="Bajic V.B."/>
            <person name="Brenner S.E."/>
            <person name="Batalov S."/>
            <person name="Forrest A.R."/>
            <person name="Zavolan M."/>
            <person name="Davis M.J."/>
            <person name="Wilming L.G."/>
            <person name="Aidinis V."/>
            <person name="Allen J.E."/>
            <person name="Ambesi-Impiombato A."/>
            <person name="Apweiler R."/>
            <person name="Aturaliya R.N."/>
            <person name="Bailey T.L."/>
            <person name="Bansal M."/>
            <person name="Baxter L."/>
            <person name="Beisel K.W."/>
            <person name="Bersano T."/>
            <person name="Bono H."/>
            <person name="Chalk A.M."/>
            <person name="Chiu K.P."/>
            <person name="Choudhary V."/>
            <person name="Christoffels A."/>
            <person name="Clutterbuck D.R."/>
            <person name="Crowe M.L."/>
            <person name="Dalla E."/>
            <person name="Dalrymple B.P."/>
            <person name="de Bono B."/>
            <person name="Della Gatta G."/>
            <person name="di Bernardo D."/>
            <person name="Down T."/>
            <person name="Engstrom P."/>
            <person name="Fagiolini M."/>
            <person name="Faulkner G."/>
            <person name="Fletcher C.F."/>
            <person name="Fukushima T."/>
            <person name="Furuno M."/>
            <person name="Futaki S."/>
            <person name="Gariboldi M."/>
            <person name="Georgii-Hemming P."/>
            <person name="Gingeras T.R."/>
            <person name="Gojobori T."/>
            <person name="Green R.E."/>
            <person name="Gustincich S."/>
            <person name="Harbers M."/>
            <person name="Hayashi Y."/>
            <person name="Hensch T.K."/>
            <person name="Hirokawa N."/>
            <person name="Hill D."/>
            <person name="Huminiecki L."/>
            <person name="Iacono M."/>
            <person name="Ikeo K."/>
            <person name="Iwama A."/>
            <person name="Ishikawa T."/>
            <person name="Jakt M."/>
            <person name="Kanapin A."/>
            <person name="Katoh M."/>
            <person name="Kawasawa Y."/>
            <person name="Kelso J."/>
            <person name="Kitamura H."/>
            <person name="Kitano H."/>
            <person name="Kollias G."/>
            <person name="Krishnan S.P."/>
            <person name="Kruger A."/>
            <person name="Kummerfeld S.K."/>
            <person name="Kurochkin I.V."/>
            <person name="Lareau L.F."/>
            <person name="Lazarevic D."/>
            <person name="Lipovich L."/>
            <person name="Liu J."/>
            <person name="Liuni S."/>
            <person name="McWilliam S."/>
            <person name="Madan Babu M."/>
            <person name="Madera M."/>
            <person name="Marchionni L."/>
            <person name="Matsuda H."/>
            <person name="Matsuzawa S."/>
            <person name="Miki H."/>
            <person name="Mignone F."/>
            <person name="Miyake S."/>
            <person name="Morris K."/>
            <person name="Mottagui-Tabar S."/>
            <person name="Mulder N."/>
            <person name="Nakano N."/>
            <person name="Nakauchi H."/>
            <person name="Ng P."/>
            <person name="Nilsson R."/>
            <person name="Nishiguchi S."/>
            <person name="Nishikawa S."/>
            <person name="Nori F."/>
            <person name="Ohara O."/>
            <person name="Okazaki Y."/>
            <person name="Orlando V."/>
            <person name="Pang K.C."/>
            <person name="Pavan W.J."/>
            <person name="Pavesi G."/>
            <person name="Pesole G."/>
            <person name="Petrovsky N."/>
            <person name="Piazza S."/>
            <person name="Reed J."/>
            <person name="Reid J.F."/>
            <person name="Ring B.Z."/>
            <person name="Ringwald M."/>
            <person name="Rost B."/>
            <person name="Ruan Y."/>
            <person name="Salzberg S.L."/>
            <person name="Sandelin A."/>
            <person name="Schneider C."/>
            <person name="Schoenbach C."/>
            <person name="Sekiguchi K."/>
            <person name="Semple C.A."/>
            <person name="Seno S."/>
            <person name="Sessa L."/>
            <person name="Sheng Y."/>
            <person name="Shibata Y."/>
            <person name="Shimada H."/>
            <person name="Shimada K."/>
            <person name="Silva D."/>
            <person name="Sinclair B."/>
            <person name="Sperling S."/>
            <person name="Stupka E."/>
            <person name="Sugiura K."/>
            <person name="Sultana R."/>
            <person name="Takenaka Y."/>
            <person name="Taki K."/>
            <person name="Tammoja K."/>
            <person name="Tan S.L."/>
            <person name="Tang S."/>
            <person name="Taylor M.S."/>
            <person name="Tegner J."/>
            <person name="Teichmann S.A."/>
            <person name="Ueda H.R."/>
            <person name="van Nimwegen E."/>
            <person name="Verardo R."/>
            <person name="Wei C.L."/>
            <person name="Yagi K."/>
            <person name="Yamanishi H."/>
            <person name="Zabarovsky E."/>
            <person name="Zhu S."/>
            <person name="Zimmer A."/>
            <person name="Hide W."/>
            <person name="Bult C."/>
            <person name="Grimmond S.M."/>
            <person name="Teasdale R.D."/>
            <person name="Liu E.T."/>
            <person name="Brusic V."/>
            <person name="Quackenbush J."/>
            <person name="Wahlestedt C."/>
            <person name="Mattick J.S."/>
            <person name="Hume D.A."/>
            <person name="Kai C."/>
            <person name="Sasaki D."/>
            <person name="Tomaru Y."/>
            <person name="Fukuda S."/>
            <person name="Kanamori-Katayama M."/>
            <person name="Suzuki M."/>
            <person name="Aoki J."/>
            <person name="Arakawa T."/>
            <person name="Iida J."/>
            <person name="Imamura K."/>
            <person name="Itoh M."/>
            <person name="Kato T."/>
            <person name="Kawaji H."/>
            <person name="Kawagashira N."/>
            <person name="Kawashima T."/>
            <person name="Kojima M."/>
            <person name="Kondo S."/>
            <person name="Konno H."/>
            <person name="Nakano K."/>
            <person name="Ninomiya N."/>
            <person name="Nishio T."/>
            <person name="Okada M."/>
            <person name="Plessy C."/>
            <person name="Shibata K."/>
            <person name="Shiraki T."/>
            <person name="Suzuki S."/>
            <person name="Tagami M."/>
            <person name="Waki K."/>
            <person name="Watahiki A."/>
            <person name="Okamura-Oho Y."/>
            <person name="Suzuki H."/>
            <person name="Kawai J."/>
            <person name="Hayashizaki Y."/>
        </authorList>
    </citation>
    <scope>NUCLEOTIDE SEQUENCE [LARGE SCALE MRNA] (ISOFORMS 1 AND 2)</scope>
    <source>
        <strain>C57BL/6J</strain>
        <tissue>Cerebellum</tissue>
        <tissue>Embryo</tissue>
        <tissue>Testis</tissue>
    </source>
</reference>
<reference key="2">
    <citation type="journal article" date="2009" name="PLoS Biol.">
        <title>Lineage-specific biology revealed by a finished genome assembly of the mouse.</title>
        <authorList>
            <person name="Church D.M."/>
            <person name="Goodstadt L."/>
            <person name="Hillier L.W."/>
            <person name="Zody M.C."/>
            <person name="Goldstein S."/>
            <person name="She X."/>
            <person name="Bult C.J."/>
            <person name="Agarwala R."/>
            <person name="Cherry J.L."/>
            <person name="DiCuccio M."/>
            <person name="Hlavina W."/>
            <person name="Kapustin Y."/>
            <person name="Meric P."/>
            <person name="Maglott D."/>
            <person name="Birtle Z."/>
            <person name="Marques A.C."/>
            <person name="Graves T."/>
            <person name="Zhou S."/>
            <person name="Teague B."/>
            <person name="Potamousis K."/>
            <person name="Churas C."/>
            <person name="Place M."/>
            <person name="Herschleb J."/>
            <person name="Runnheim R."/>
            <person name="Forrest D."/>
            <person name="Amos-Landgraf J."/>
            <person name="Schwartz D.C."/>
            <person name="Cheng Z."/>
            <person name="Lindblad-Toh K."/>
            <person name="Eichler E.E."/>
            <person name="Ponting C.P."/>
        </authorList>
    </citation>
    <scope>NUCLEOTIDE SEQUENCE [LARGE SCALE GENOMIC DNA]</scope>
    <source>
        <strain>C57BL/6J</strain>
    </source>
</reference>
<reference key="3">
    <citation type="submission" date="2005-07" db="EMBL/GenBank/DDBJ databases">
        <authorList>
            <person name="Mural R.J."/>
            <person name="Adams M.D."/>
            <person name="Myers E.W."/>
            <person name="Smith H.O."/>
            <person name="Venter J.C."/>
        </authorList>
    </citation>
    <scope>NUCLEOTIDE SEQUENCE [LARGE SCALE GENOMIC DNA]</scope>
</reference>
<reference key="4">
    <citation type="journal article" date="2004" name="Genome Res.">
        <title>The status, quality, and expansion of the NIH full-length cDNA project: the Mammalian Gene Collection (MGC).</title>
        <authorList>
            <consortium name="The MGC Project Team"/>
        </authorList>
    </citation>
    <scope>NUCLEOTIDE SEQUENCE [LARGE SCALE MRNA] OF 194-865 (ISOFORM 1)</scope>
    <source>
        <strain>C57BL/6J</strain>
        <tissue>Egg</tissue>
        <tissue>Embryonic germ cell</tissue>
    </source>
</reference>
<reference key="5">
    <citation type="journal article" date="2010" name="Cancer Cell">
        <title>Targeting mitotic exit leads to tumor regression in vivo: Modulation by Cdk1, Mastl, and the PP2A/B55alpha,delta phosphatase.</title>
        <authorList>
            <person name="Manchado E."/>
            <person name="Guillamot M."/>
            <person name="de Carcer G."/>
            <person name="Eguren M."/>
            <person name="Trickey M."/>
            <person name="Garcia-Higuera I."/>
            <person name="Moreno S."/>
            <person name="Yamano H."/>
            <person name="Canamero M."/>
            <person name="Malumbres M."/>
        </authorList>
    </citation>
    <scope>FUNCTION</scope>
</reference>